<evidence type="ECO:0000255" key="1">
    <source>
        <dbReference type="PROSITE-ProRule" id="PRU00417"/>
    </source>
</evidence>
<evidence type="ECO:0000255" key="2">
    <source>
        <dbReference type="PROSITE-ProRule" id="PRU00422"/>
    </source>
</evidence>
<evidence type="ECO:0000255" key="3">
    <source>
        <dbReference type="PROSITE-ProRule" id="PRU00704"/>
    </source>
</evidence>
<evidence type="ECO:0000269" key="4">
    <source>
    </source>
</evidence>
<evidence type="ECO:0000269" key="5">
    <source>
    </source>
</evidence>
<evidence type="ECO:0000305" key="6"/>
<evidence type="ECO:0000305" key="7">
    <source>
    </source>
</evidence>
<comment type="function">
    <text evidence="4 5">Positively regulates the expression of the mannose operon that consists of three genes, manP, manA, and yjdF, which are responsible for the transport and utilization of mannose. Also activates its own expression.</text>
</comment>
<comment type="catalytic activity">
    <reaction>
        <text>D-mannose(out) + N(pros)-phospho-L-histidyl-[protein] = D-mannose 6-phosphate(in) + L-histidyl-[protein]</text>
        <dbReference type="Rhea" id="RHEA:49232"/>
        <dbReference type="Rhea" id="RHEA-COMP:9745"/>
        <dbReference type="Rhea" id="RHEA-COMP:9746"/>
        <dbReference type="ChEBI" id="CHEBI:4208"/>
        <dbReference type="ChEBI" id="CHEBI:29979"/>
        <dbReference type="ChEBI" id="CHEBI:58735"/>
        <dbReference type="ChEBI" id="CHEBI:64837"/>
        <dbReference type="EC" id="2.7.1.191"/>
    </reaction>
</comment>
<comment type="activity regulation">
    <text evidence="5">The regulatory activity of ManR is modulated by phosphorylation and dephosphorylation of the various ManR domains. It becomes activated via phosphoryl group transfer from PEP, EI and HPr on the two conserved histidine residues in the PRD 2 domain, whereas phosphorylation of the EIIA-like domain on His-570 by the PTS EIIB-Man domain of ManP inactivates ManR (PubMed:23551403).</text>
</comment>
<comment type="induction">
    <text evidence="4">Up-regulated by mannose. Is subject to carbon catabolite repression (CCR) by glucose.</text>
</comment>
<comment type="disruption phenotype">
    <text evidence="4">Cells lacking this gene are unable to grow with mannose as the sole carbon source.</text>
</comment>
<comment type="similarity">
    <text evidence="6">Belongs to the transcriptional antiterminator BglG family.</text>
</comment>
<accession>O31644</accession>
<protein>
    <recommendedName>
        <fullName>Transcriptional regulator ManR</fullName>
    </recommendedName>
    <alternativeName>
        <fullName>Mannose operon transcriptional activator</fullName>
    </alternativeName>
    <domain>
        <recommendedName>
            <fullName>Putative phosphotransferase enzyme IIB component</fullName>
            <ecNumber>2.7.1.191</ecNumber>
        </recommendedName>
        <alternativeName>
            <fullName>Putative PTS system EIIB component</fullName>
        </alternativeName>
    </domain>
    <domain>
        <recommendedName>
            <fullName>Putative phosphotransferase enzyme IIA component</fullName>
        </recommendedName>
        <alternativeName>
            <fullName>Putative PTS system EIIA component</fullName>
        </alternativeName>
    </domain>
</protein>
<dbReference type="EC" id="2.7.1.191"/>
<dbReference type="EMBL" id="AL009126">
    <property type="protein sequence ID" value="CAB13057.2"/>
    <property type="molecule type" value="Genomic_DNA"/>
</dbReference>
<dbReference type="RefSeq" id="NP_389082.2">
    <property type="nucleotide sequence ID" value="NC_000964.3"/>
</dbReference>
<dbReference type="RefSeq" id="WP_003245617.1">
    <property type="nucleotide sequence ID" value="NZ_OZ025638.1"/>
</dbReference>
<dbReference type="SMR" id="O31644"/>
<dbReference type="FunCoup" id="O31644">
    <property type="interactions" value="44"/>
</dbReference>
<dbReference type="STRING" id="224308.BSU12000"/>
<dbReference type="iPTMnet" id="O31644"/>
<dbReference type="jPOST" id="O31644"/>
<dbReference type="PaxDb" id="224308-BSU12000"/>
<dbReference type="EnsemblBacteria" id="CAB13057">
    <property type="protein sequence ID" value="CAB13057"/>
    <property type="gene ID" value="BSU_12000"/>
</dbReference>
<dbReference type="GeneID" id="939394"/>
<dbReference type="KEGG" id="bsu:BSU12000"/>
<dbReference type="PATRIC" id="fig|224308.179.peg.1295"/>
<dbReference type="eggNOG" id="COG1762">
    <property type="taxonomic scope" value="Bacteria"/>
</dbReference>
<dbReference type="eggNOG" id="COG3711">
    <property type="taxonomic scope" value="Bacteria"/>
</dbReference>
<dbReference type="InParanoid" id="O31644"/>
<dbReference type="OrthoDB" id="3175596at2"/>
<dbReference type="PhylomeDB" id="O31644"/>
<dbReference type="BioCyc" id="BSUB:BSU12000-MONOMER"/>
<dbReference type="Proteomes" id="UP000001570">
    <property type="component" value="Chromosome"/>
</dbReference>
<dbReference type="GO" id="GO:0003677">
    <property type="term" value="F:DNA binding"/>
    <property type="evidence" value="ECO:0007669"/>
    <property type="project" value="UniProtKB-KW"/>
</dbReference>
<dbReference type="GO" id="GO:0016301">
    <property type="term" value="F:kinase activity"/>
    <property type="evidence" value="ECO:0007669"/>
    <property type="project" value="UniProtKB-KW"/>
</dbReference>
<dbReference type="GO" id="GO:0008982">
    <property type="term" value="F:protein-N(PI)-phosphohistidine-sugar phosphotransferase activity"/>
    <property type="evidence" value="ECO:0007669"/>
    <property type="project" value="InterPro"/>
</dbReference>
<dbReference type="GO" id="GO:0009401">
    <property type="term" value="P:phosphoenolpyruvate-dependent sugar phosphotransferase system"/>
    <property type="evidence" value="ECO:0007669"/>
    <property type="project" value="InterPro"/>
</dbReference>
<dbReference type="GO" id="GO:0006355">
    <property type="term" value="P:regulation of DNA-templated transcription"/>
    <property type="evidence" value="ECO:0007669"/>
    <property type="project" value="InterPro"/>
</dbReference>
<dbReference type="CDD" id="cd00211">
    <property type="entry name" value="PTS_IIA_fru"/>
    <property type="match status" value="1"/>
</dbReference>
<dbReference type="CDD" id="cd05568">
    <property type="entry name" value="PTS_IIB_bgl_like"/>
    <property type="match status" value="1"/>
</dbReference>
<dbReference type="Gene3D" id="3.40.50.2300">
    <property type="match status" value="1"/>
</dbReference>
<dbReference type="Gene3D" id="3.40.930.10">
    <property type="entry name" value="Mannitol-specific EII, Chain A"/>
    <property type="match status" value="1"/>
</dbReference>
<dbReference type="Gene3D" id="1.10.1790.10">
    <property type="entry name" value="PRD domain"/>
    <property type="match status" value="2"/>
</dbReference>
<dbReference type="Gene3D" id="1.10.10.10">
    <property type="entry name" value="Winged helix-like DNA-binding domain superfamily/Winged helix DNA-binding domain"/>
    <property type="match status" value="2"/>
</dbReference>
<dbReference type="InterPro" id="IPR050661">
    <property type="entry name" value="BglG_antiterminators"/>
</dbReference>
<dbReference type="InterPro" id="IPR013196">
    <property type="entry name" value="HTH_11"/>
</dbReference>
<dbReference type="InterPro" id="IPR007737">
    <property type="entry name" value="Mga_HTH"/>
</dbReference>
<dbReference type="InterPro" id="IPR011608">
    <property type="entry name" value="PRD"/>
</dbReference>
<dbReference type="InterPro" id="IPR036634">
    <property type="entry name" value="PRD_sf"/>
</dbReference>
<dbReference type="InterPro" id="IPR016152">
    <property type="entry name" value="PTrfase/Anion_transptr"/>
</dbReference>
<dbReference type="InterPro" id="IPR002178">
    <property type="entry name" value="PTS_EIIA_type-2_dom"/>
</dbReference>
<dbReference type="InterPro" id="IPR036095">
    <property type="entry name" value="PTS_EIIB-like_sf"/>
</dbReference>
<dbReference type="InterPro" id="IPR013011">
    <property type="entry name" value="PTS_EIIB_2"/>
</dbReference>
<dbReference type="InterPro" id="IPR036388">
    <property type="entry name" value="WH-like_DNA-bd_sf"/>
</dbReference>
<dbReference type="PANTHER" id="PTHR30185">
    <property type="entry name" value="CRYPTIC BETA-GLUCOSIDE BGL OPERON ANTITERMINATOR"/>
    <property type="match status" value="1"/>
</dbReference>
<dbReference type="PANTHER" id="PTHR30185:SF12">
    <property type="entry name" value="TRANSCRIPTIONAL REGULATOR MANR"/>
    <property type="match status" value="1"/>
</dbReference>
<dbReference type="Pfam" id="PF08279">
    <property type="entry name" value="HTH_11"/>
    <property type="match status" value="1"/>
</dbReference>
<dbReference type="Pfam" id="PF05043">
    <property type="entry name" value="Mga"/>
    <property type="match status" value="1"/>
</dbReference>
<dbReference type="Pfam" id="PF00874">
    <property type="entry name" value="PRD"/>
    <property type="match status" value="2"/>
</dbReference>
<dbReference type="Pfam" id="PF00359">
    <property type="entry name" value="PTS_EIIA_2"/>
    <property type="match status" value="1"/>
</dbReference>
<dbReference type="SUPFAM" id="SSF55804">
    <property type="entry name" value="Phoshotransferase/anion transport protein"/>
    <property type="match status" value="1"/>
</dbReference>
<dbReference type="SUPFAM" id="SSF52794">
    <property type="entry name" value="PTS system IIB component-like"/>
    <property type="match status" value="1"/>
</dbReference>
<dbReference type="SUPFAM" id="SSF63520">
    <property type="entry name" value="PTS-regulatory domain, PRD"/>
    <property type="match status" value="2"/>
</dbReference>
<dbReference type="PROSITE" id="PS51372">
    <property type="entry name" value="PRD_2"/>
    <property type="match status" value="2"/>
</dbReference>
<dbReference type="PROSITE" id="PS51094">
    <property type="entry name" value="PTS_EIIA_TYPE_2"/>
    <property type="match status" value="1"/>
</dbReference>
<dbReference type="PROSITE" id="PS00372">
    <property type="entry name" value="PTS_EIIA_TYPE_2_HIS"/>
    <property type="match status" value="1"/>
</dbReference>
<dbReference type="PROSITE" id="PS51099">
    <property type="entry name" value="PTS_EIIB_TYPE_2"/>
    <property type="match status" value="1"/>
</dbReference>
<keyword id="KW-0010">Activator</keyword>
<keyword id="KW-0238">DNA-binding</keyword>
<keyword id="KW-0418">Kinase</keyword>
<keyword id="KW-0597">Phosphoprotein</keyword>
<keyword id="KW-1185">Reference proteome</keyword>
<keyword id="KW-0677">Repeat</keyword>
<keyword id="KW-0804">Transcription</keyword>
<keyword id="KW-0805">Transcription regulation</keyword>
<keyword id="KW-0808">Transferase</keyword>
<sequence length="648" mass="75351">MEYINTRQKEILYLLLSEPDDYLVVQDFADRVQCSEKTIRNDLKVIEDYLNEHSHAQLIRKPGLGVYLHIEEQERTWLSQQLHTEHFSSRQRSDKERMLHIAYDLLMNPKPVSAKDIAARHFVNRSSIKKDLYAVEEWLKRFDLTLVSRQRLGLKVEGNERNKRKALARISDLIHNTAFTSQFIKSKFLHYEVDFVTKEIKSLQKKHSLYFTDETFESLLLHTLLMVRRIKMKQPISLSPKEMAAVKKKKEYQWTFACLQRLEPVFAIRFPEEEAVYLTLHILGGKVRYPLQTEENLENAVLPKVVGHLINRVSELKMMDFHKDQDLINGLNIHLNTVLQRLSYDLSVANPMLNDIKKMYPYLFHLIIDVLEDINQTFDLHIPEEEAAYLTLHFQAAIERMQGSSETHKKAVIVCHMGIGMSQLLRTKIERKYHQIAVMACIAKADLKDYIKKHEDIDLVISTIALENITVPHIVVSPLLEPGEEKKLSAFIRQLGESHRQKQKTFQMLNNTTPFLVFLQQEAEHRYKLIEQLATALFEKGYVDKDYAVHAVMREKMSATNIGSGIAIPHANAKFIKQSAIAIATLKEPLEWGNEKVSLVFMLAVKHEDQTMTKQLFSELSYLSEQPAFVQKLTKETNVMTFLSHLDY</sequence>
<feature type="chain" id="PRO_0000376080" description="Transcriptional regulator ManR">
    <location>
        <begin position="1"/>
        <end position="648"/>
    </location>
</feature>
<feature type="domain" description="PRD 1" evidence="3">
    <location>
        <begin position="187"/>
        <end position="292"/>
    </location>
</feature>
<feature type="domain" description="PRD 2" evidence="3">
    <location>
        <begin position="297"/>
        <end position="404"/>
    </location>
</feature>
<feature type="domain" description="PTS EIIB type-2" evidence="2">
    <location>
        <begin position="409"/>
        <end position="500"/>
    </location>
</feature>
<feature type="domain" description="PTS EIIA type-2" evidence="1">
    <location>
        <begin position="510"/>
        <end position="648"/>
    </location>
</feature>
<feature type="modified residue" description="Phosphohistidine; by HPr" evidence="3">
    <location>
        <position position="222"/>
    </location>
</feature>
<feature type="modified residue" description="Phosphohistidine; by HPr" evidence="3">
    <location>
        <position position="281"/>
    </location>
</feature>
<feature type="modified residue" description="Phosphohistidine; by HPr" evidence="7">
    <location>
        <position position="334"/>
    </location>
</feature>
<feature type="modified residue" description="Phosphohistidine; by HPr" evidence="7">
    <location>
        <position position="393"/>
    </location>
</feature>
<feature type="modified residue" description="Phosphocysteine; by EIIA" evidence="7">
    <location>
        <position position="415"/>
    </location>
</feature>
<feature type="modified residue" description="Phosphohistidine; by EIIB" evidence="7">
    <location>
        <position position="570"/>
    </location>
</feature>
<feature type="mutagenesis site" description="Reduced DNA binding." evidence="5">
    <original>H</original>
    <variation>A</variation>
    <location>
        <position position="222"/>
    </location>
</feature>
<feature type="mutagenesis site" description="Reduced DNA binding." evidence="5">
    <original>H</original>
    <variation>A</variation>
    <location>
        <position position="281"/>
    </location>
</feature>
<feature type="mutagenesis site" description="Loss of DNA binding." evidence="5">
    <original>H</original>
    <variation>A</variation>
    <location>
        <position position="334"/>
    </location>
</feature>
<feature type="mutagenesis site" description="Loss of DNA binding." evidence="5">
    <original>H</original>
    <variation>A</variation>
    <location>
        <position position="393"/>
    </location>
</feature>
<feature type="mutagenesis site" description="No effect on DNA binding. Results in a weak constitutive ManR activity." evidence="5">
    <original>C</original>
    <variation>A</variation>
    <location>
        <position position="415"/>
    </location>
</feature>
<feature type="mutagenesis site" description="No reduction in DNA-binding activity can be observed in the presence of EIIBA-Man. Leads to a nearly constitutive ManR activity." evidence="5">
    <original>H</original>
    <variation>A</variation>
    <location>
        <position position="570"/>
    </location>
</feature>
<proteinExistence type="evidence at protein level"/>
<organism>
    <name type="scientific">Bacillus subtilis (strain 168)</name>
    <dbReference type="NCBI Taxonomy" id="224308"/>
    <lineage>
        <taxon>Bacteria</taxon>
        <taxon>Bacillati</taxon>
        <taxon>Bacillota</taxon>
        <taxon>Bacilli</taxon>
        <taxon>Bacillales</taxon>
        <taxon>Bacillaceae</taxon>
        <taxon>Bacillus</taxon>
    </lineage>
</organism>
<gene>
    <name type="primary">manR</name>
    <name type="ordered locus">BSU12000</name>
</gene>
<name>MANR_BACSU</name>
<reference key="1">
    <citation type="journal article" date="1997" name="Nature">
        <title>The complete genome sequence of the Gram-positive bacterium Bacillus subtilis.</title>
        <authorList>
            <person name="Kunst F."/>
            <person name="Ogasawara N."/>
            <person name="Moszer I."/>
            <person name="Albertini A.M."/>
            <person name="Alloni G."/>
            <person name="Azevedo V."/>
            <person name="Bertero M.G."/>
            <person name="Bessieres P."/>
            <person name="Bolotin A."/>
            <person name="Borchert S."/>
            <person name="Borriss R."/>
            <person name="Boursier L."/>
            <person name="Brans A."/>
            <person name="Braun M."/>
            <person name="Brignell S.C."/>
            <person name="Bron S."/>
            <person name="Brouillet S."/>
            <person name="Bruschi C.V."/>
            <person name="Caldwell B."/>
            <person name="Capuano V."/>
            <person name="Carter N.M."/>
            <person name="Choi S.-K."/>
            <person name="Codani J.-J."/>
            <person name="Connerton I.F."/>
            <person name="Cummings N.J."/>
            <person name="Daniel R.A."/>
            <person name="Denizot F."/>
            <person name="Devine K.M."/>
            <person name="Duesterhoeft A."/>
            <person name="Ehrlich S.D."/>
            <person name="Emmerson P.T."/>
            <person name="Entian K.-D."/>
            <person name="Errington J."/>
            <person name="Fabret C."/>
            <person name="Ferrari E."/>
            <person name="Foulger D."/>
            <person name="Fritz C."/>
            <person name="Fujita M."/>
            <person name="Fujita Y."/>
            <person name="Fuma S."/>
            <person name="Galizzi A."/>
            <person name="Galleron N."/>
            <person name="Ghim S.-Y."/>
            <person name="Glaser P."/>
            <person name="Goffeau A."/>
            <person name="Golightly E.J."/>
            <person name="Grandi G."/>
            <person name="Guiseppi G."/>
            <person name="Guy B.J."/>
            <person name="Haga K."/>
            <person name="Haiech J."/>
            <person name="Harwood C.R."/>
            <person name="Henaut A."/>
            <person name="Hilbert H."/>
            <person name="Holsappel S."/>
            <person name="Hosono S."/>
            <person name="Hullo M.-F."/>
            <person name="Itaya M."/>
            <person name="Jones L.-M."/>
            <person name="Joris B."/>
            <person name="Karamata D."/>
            <person name="Kasahara Y."/>
            <person name="Klaerr-Blanchard M."/>
            <person name="Klein C."/>
            <person name="Kobayashi Y."/>
            <person name="Koetter P."/>
            <person name="Koningstein G."/>
            <person name="Krogh S."/>
            <person name="Kumano M."/>
            <person name="Kurita K."/>
            <person name="Lapidus A."/>
            <person name="Lardinois S."/>
            <person name="Lauber J."/>
            <person name="Lazarevic V."/>
            <person name="Lee S.-M."/>
            <person name="Levine A."/>
            <person name="Liu H."/>
            <person name="Masuda S."/>
            <person name="Mauel C."/>
            <person name="Medigue C."/>
            <person name="Medina N."/>
            <person name="Mellado R.P."/>
            <person name="Mizuno M."/>
            <person name="Moestl D."/>
            <person name="Nakai S."/>
            <person name="Noback M."/>
            <person name="Noone D."/>
            <person name="O'Reilly M."/>
            <person name="Ogawa K."/>
            <person name="Ogiwara A."/>
            <person name="Oudega B."/>
            <person name="Park S.-H."/>
            <person name="Parro V."/>
            <person name="Pohl T.M."/>
            <person name="Portetelle D."/>
            <person name="Porwollik S."/>
            <person name="Prescott A.M."/>
            <person name="Presecan E."/>
            <person name="Pujic P."/>
            <person name="Purnelle B."/>
            <person name="Rapoport G."/>
            <person name="Rey M."/>
            <person name="Reynolds S."/>
            <person name="Rieger M."/>
            <person name="Rivolta C."/>
            <person name="Rocha E."/>
            <person name="Roche B."/>
            <person name="Rose M."/>
            <person name="Sadaie Y."/>
            <person name="Sato T."/>
            <person name="Scanlan E."/>
            <person name="Schleich S."/>
            <person name="Schroeter R."/>
            <person name="Scoffone F."/>
            <person name="Sekiguchi J."/>
            <person name="Sekowska A."/>
            <person name="Seror S.J."/>
            <person name="Serror P."/>
            <person name="Shin B.-S."/>
            <person name="Soldo B."/>
            <person name="Sorokin A."/>
            <person name="Tacconi E."/>
            <person name="Takagi T."/>
            <person name="Takahashi H."/>
            <person name="Takemaru K."/>
            <person name="Takeuchi M."/>
            <person name="Tamakoshi A."/>
            <person name="Tanaka T."/>
            <person name="Terpstra P."/>
            <person name="Tognoni A."/>
            <person name="Tosato V."/>
            <person name="Uchiyama S."/>
            <person name="Vandenbol M."/>
            <person name="Vannier F."/>
            <person name="Vassarotti A."/>
            <person name="Viari A."/>
            <person name="Wambutt R."/>
            <person name="Wedler E."/>
            <person name="Wedler H."/>
            <person name="Weitzenegger T."/>
            <person name="Winters P."/>
            <person name="Wipat A."/>
            <person name="Yamamoto H."/>
            <person name="Yamane K."/>
            <person name="Yasumoto K."/>
            <person name="Yata K."/>
            <person name="Yoshida K."/>
            <person name="Yoshikawa H.-F."/>
            <person name="Zumstein E."/>
            <person name="Yoshikawa H."/>
            <person name="Danchin A."/>
        </authorList>
    </citation>
    <scope>NUCLEOTIDE SEQUENCE [LARGE SCALE GENOMIC DNA]</scope>
    <source>
        <strain>168</strain>
    </source>
</reference>
<reference key="2">
    <citation type="journal article" date="2009" name="Microbiology">
        <title>From a consortium sequence to a unified sequence: the Bacillus subtilis 168 reference genome a decade later.</title>
        <authorList>
            <person name="Barbe V."/>
            <person name="Cruveiller S."/>
            <person name="Kunst F."/>
            <person name="Lenoble P."/>
            <person name="Meurice G."/>
            <person name="Sekowska A."/>
            <person name="Vallenet D."/>
            <person name="Wang T."/>
            <person name="Moszer I."/>
            <person name="Medigue C."/>
            <person name="Danchin A."/>
        </authorList>
    </citation>
    <scope>SEQUENCE REVISION TO 106</scope>
</reference>
<reference key="3">
    <citation type="journal article" date="2010" name="J. Bacteriol.">
        <title>Characterization of a mannose utilization system in Bacillus subtilis.</title>
        <authorList>
            <person name="Sun T."/>
            <person name="Altenbuchner J."/>
        </authorList>
    </citation>
    <scope>FUNCTION AS A TRANSCRIPTIONAL ACTIVATOR</scope>
    <scope>INDUCTION</scope>
    <scope>DISRUPTION PHENOTYPE</scope>
</reference>
<reference key="4">
    <citation type="journal article" date="2013" name="Mol. Microbiol.">
        <title>The Bacillus subtilis mannose regulator, ManR, a DNA-binding protein regulated by HPr and its cognate PTS transporter ManP.</title>
        <authorList>
            <person name="Wenzel M."/>
            <person name="Altenbuchner J."/>
        </authorList>
    </citation>
    <scope>FUNCTION</scope>
    <scope>REGULATION</scope>
    <scope>DNA-BINDING</scope>
    <scope>PHOSPHORYLATION AT HIS-334; HIS-393; CYS-415 AND HIS-570</scope>
    <scope>MUTAGENESIS OF HIS-222; HIS-281; HIS-334; HIS-393; CYS-415 AND HIS-570</scope>
</reference>